<keyword id="KW-0002">3D-structure</keyword>
<keyword id="KW-1185">Reference proteome</keyword>
<accession>O16216</accession>
<feature type="chain" id="PRO_0000315646" description="CWF19-like protein 1 homolog">
    <location>
        <begin position="1"/>
        <end position="533"/>
    </location>
</feature>
<feature type="region of interest" description="Disordered" evidence="1">
    <location>
        <begin position="290"/>
        <end position="314"/>
    </location>
</feature>
<dbReference type="EMBL" id="FO081132">
    <property type="protein sequence ID" value="CCD69355.1"/>
    <property type="molecule type" value="Genomic_DNA"/>
</dbReference>
<dbReference type="PIR" id="T31709">
    <property type="entry name" value="T31709"/>
</dbReference>
<dbReference type="PDB" id="8RO1">
    <property type="method" value="EM"/>
    <property type="resolution" value="3.00 A"/>
    <property type="chains" value="L1=1-533"/>
</dbReference>
<dbReference type="PDBsum" id="8RO1"/>
<dbReference type="EMDB" id="EMD-19398"/>
<dbReference type="SMR" id="O16216"/>
<dbReference type="BioGRID" id="44048">
    <property type="interactions" value="2"/>
</dbReference>
<dbReference type="FunCoup" id="O16216">
    <property type="interactions" value="3131"/>
</dbReference>
<dbReference type="STRING" id="6239.F17A9.2.1"/>
<dbReference type="PaxDb" id="6239-F17A9.2"/>
<dbReference type="PeptideAtlas" id="O16216"/>
<dbReference type="EnsemblMetazoa" id="F17A9.2.1">
    <property type="protein sequence ID" value="F17A9.2.1"/>
    <property type="gene ID" value="WBGene00017534"/>
</dbReference>
<dbReference type="KEGG" id="cel:CELE_F17A9.2"/>
<dbReference type="UCSC" id="F17A9.2">
    <property type="organism name" value="c. elegans"/>
</dbReference>
<dbReference type="AGR" id="WB:WBGene00017534"/>
<dbReference type="CTD" id="179000"/>
<dbReference type="WormBase" id="F17A9.2">
    <property type="protein sequence ID" value="CE19798"/>
    <property type="gene ID" value="WBGene00017534"/>
    <property type="gene designation" value="cwf-19L1"/>
</dbReference>
<dbReference type="eggNOG" id="KOG2476">
    <property type="taxonomic scope" value="Eukaryota"/>
</dbReference>
<dbReference type="GeneTree" id="ENSGT00940000156000"/>
<dbReference type="HOGENOM" id="CLU_019955_2_0_1"/>
<dbReference type="InParanoid" id="O16216"/>
<dbReference type="OMA" id="IVPITHY"/>
<dbReference type="OrthoDB" id="444325at2759"/>
<dbReference type="PhylomeDB" id="O16216"/>
<dbReference type="PRO" id="PR:O16216"/>
<dbReference type="Proteomes" id="UP000001940">
    <property type="component" value="Chromosome V"/>
</dbReference>
<dbReference type="Bgee" id="WBGene00017534">
    <property type="expression patterns" value="Expressed in germ line (C elegans) and 4 other cell types or tissues"/>
</dbReference>
<dbReference type="GO" id="GO:0071014">
    <property type="term" value="C:post-mRNA release spliceosomal complex"/>
    <property type="evidence" value="ECO:0000318"/>
    <property type="project" value="GO_Central"/>
</dbReference>
<dbReference type="GO" id="GO:0061632">
    <property type="term" value="F:RNA lariat debranching enzyme activator activity"/>
    <property type="evidence" value="ECO:0000318"/>
    <property type="project" value="GO_Central"/>
</dbReference>
<dbReference type="GO" id="GO:0000398">
    <property type="term" value="P:mRNA splicing, via spliceosome"/>
    <property type="evidence" value="ECO:0000318"/>
    <property type="project" value="GO_Central"/>
</dbReference>
<dbReference type="CDD" id="cd07380">
    <property type="entry name" value="MPP_CWF19_N"/>
    <property type="match status" value="1"/>
</dbReference>
<dbReference type="InterPro" id="IPR040194">
    <property type="entry name" value="Cwf19-like"/>
</dbReference>
<dbReference type="InterPro" id="IPR006768">
    <property type="entry name" value="Cwf19-like_C_dom-1"/>
</dbReference>
<dbReference type="InterPro" id="IPR006767">
    <property type="entry name" value="Cwf19-like_C_dom-2"/>
</dbReference>
<dbReference type="InterPro" id="IPR036265">
    <property type="entry name" value="HIT-like_sf"/>
</dbReference>
<dbReference type="PANTHER" id="PTHR12072">
    <property type="entry name" value="CWF19, CELL CYCLE CONTROL PROTEIN"/>
    <property type="match status" value="1"/>
</dbReference>
<dbReference type="PANTHER" id="PTHR12072:SF4">
    <property type="entry name" value="CWF19-LIKE PROTEIN 1"/>
    <property type="match status" value="1"/>
</dbReference>
<dbReference type="Pfam" id="PF04677">
    <property type="entry name" value="CwfJ_C_1"/>
    <property type="match status" value="1"/>
</dbReference>
<dbReference type="Pfam" id="PF04676">
    <property type="entry name" value="CwfJ_C_2"/>
    <property type="match status" value="1"/>
</dbReference>
<dbReference type="SUPFAM" id="SSF54197">
    <property type="entry name" value="HIT-like"/>
    <property type="match status" value="1"/>
</dbReference>
<protein>
    <recommendedName>
        <fullName>CWF19-like protein 1 homolog</fullName>
    </recommendedName>
</protein>
<sequence length="533" mass="58961">MATQQAKILCCGDVNGNFVELIKKISTTEKKNGPFDSLFCVGEFFGDDDDSNEKVINGNIEFPIPTYILGPANPRYSYLYPEESIEFSSNLTYLGKKGLLNTASGLQIAYLSGVEGSSKDLSCFDKADVEELLIPLGTQVGFSGTDILLTSVWPADIARHSHNQPSKPQPGSVLLSKLAAHLKPRYHFAGLGVHYERQPYRNHRVLLEPARHTTRFIGLAAIGNPEKQKWLYACNVKPMRKMEKEELTAQPPNASEFPYRELLEEIAAKETLSRMNGNGQRPEGSQYRFEMGGAEDGAGNGRKRHNDGGNDGPRNKQPVGPCWFCLSNVDAEKHLVVAIGNKCYAAMPKGPLTEDHVMVLSVGHIQSQVSAPVEVRDEIEKFKSAFTLMANKQGKALVTFERNFRTQHLQVQMVMIDKSSSKALKSSFTTAAACAGFELVTMGPDESLLDMVNEGCPYFVAELPDGSKLFTRSMKGFPLHFGREVLASTPILDCEDKVDWKACVLAKEKEVELVNKLKSDFKPFDFTAEDDSD</sequence>
<gene>
    <name evidence="3" type="primary">cwf-19L1</name>
    <name evidence="3" type="ORF">F17A9.2</name>
</gene>
<organism>
    <name type="scientific">Caenorhabditis elegans</name>
    <dbReference type="NCBI Taxonomy" id="6239"/>
    <lineage>
        <taxon>Eukaryota</taxon>
        <taxon>Metazoa</taxon>
        <taxon>Ecdysozoa</taxon>
        <taxon>Nematoda</taxon>
        <taxon>Chromadorea</taxon>
        <taxon>Rhabditida</taxon>
        <taxon>Rhabditina</taxon>
        <taxon>Rhabditomorpha</taxon>
        <taxon>Rhabditoidea</taxon>
        <taxon>Rhabditidae</taxon>
        <taxon>Peloderinae</taxon>
        <taxon>Caenorhabditis</taxon>
    </lineage>
</organism>
<proteinExistence type="evidence at protein level"/>
<name>C19L1_CAEEL</name>
<evidence type="ECO:0000256" key="1">
    <source>
        <dbReference type="SAM" id="MobiDB-lite"/>
    </source>
</evidence>
<evidence type="ECO:0000305" key="2"/>
<evidence type="ECO:0000312" key="3">
    <source>
        <dbReference type="WormBase" id="F17A9.2"/>
    </source>
</evidence>
<reference key="1">
    <citation type="journal article" date="1998" name="Science">
        <title>Genome sequence of the nematode C. elegans: a platform for investigating biology.</title>
        <authorList>
            <consortium name="The C. elegans sequencing consortium"/>
        </authorList>
    </citation>
    <scope>NUCLEOTIDE SEQUENCE [LARGE SCALE GENOMIC DNA]</scope>
    <source>
        <strain>Bristol N2</strain>
    </source>
</reference>
<comment type="similarity">
    <text evidence="2">Belongs to the CWF19 family.</text>
</comment>